<sequence>MSVHIELPTELRPLMKRPLGTLYRGKGRDTVEKFVGELASPTKLISVGDVTTFHLLEAGIIPDICIVDNRTKRKPVSRDVSDRNRDKVYEEVSVDNPAGIITDELIKTLCEAFDSEKLLRIFVRGEEDLATLPVILMAPLGSVVLYGQPDEGVVFVRVTEEKKEEIRVLFEKLISKNQNTELDKIRRILDGHKDP</sequence>
<organism>
    <name type="scientific">Methanosarcina acetivorans (strain ATCC 35395 / DSM 2834 / JCM 12185 / C2A)</name>
    <dbReference type="NCBI Taxonomy" id="188937"/>
    <lineage>
        <taxon>Archaea</taxon>
        <taxon>Methanobacteriati</taxon>
        <taxon>Methanobacteriota</taxon>
        <taxon>Stenosarchaea group</taxon>
        <taxon>Methanomicrobia</taxon>
        <taxon>Methanosarcinales</taxon>
        <taxon>Methanosarcinaceae</taxon>
        <taxon>Methanosarcina</taxon>
    </lineage>
</organism>
<accession>Q8TJT3</accession>
<comment type="function">
    <text evidence="1">Catalyzes the GTP-dependent phosphorylation of the 3'-hydroxyl group of dephosphocoenzyme A to form coenzyme A (CoA).</text>
</comment>
<comment type="catalytic activity">
    <reaction evidence="1">
        <text>3'-dephospho-CoA + GTP = GDP + CoA + H(+)</text>
        <dbReference type="Rhea" id="RHEA:61156"/>
        <dbReference type="ChEBI" id="CHEBI:15378"/>
        <dbReference type="ChEBI" id="CHEBI:37565"/>
        <dbReference type="ChEBI" id="CHEBI:57287"/>
        <dbReference type="ChEBI" id="CHEBI:57328"/>
        <dbReference type="ChEBI" id="CHEBI:58189"/>
        <dbReference type="EC" id="2.7.1.237"/>
    </reaction>
</comment>
<comment type="pathway">
    <text evidence="1">Cofactor biosynthesis; coenzyme A biosynthesis.</text>
</comment>
<comment type="similarity">
    <text evidence="1">Belongs to the GTP-dependent DPCK family.</text>
</comment>
<reference key="1">
    <citation type="journal article" date="2002" name="Genome Res.">
        <title>The genome of Methanosarcina acetivorans reveals extensive metabolic and physiological diversity.</title>
        <authorList>
            <person name="Galagan J.E."/>
            <person name="Nusbaum C."/>
            <person name="Roy A."/>
            <person name="Endrizzi M.G."/>
            <person name="Macdonald P."/>
            <person name="FitzHugh W."/>
            <person name="Calvo S."/>
            <person name="Engels R."/>
            <person name="Smirnov S."/>
            <person name="Atnoor D."/>
            <person name="Brown A."/>
            <person name="Allen N."/>
            <person name="Naylor J."/>
            <person name="Stange-Thomann N."/>
            <person name="DeArellano K."/>
            <person name="Johnson R."/>
            <person name="Linton L."/>
            <person name="McEwan P."/>
            <person name="McKernan K."/>
            <person name="Talamas J."/>
            <person name="Tirrell A."/>
            <person name="Ye W."/>
            <person name="Zimmer A."/>
            <person name="Barber R.D."/>
            <person name="Cann I."/>
            <person name="Graham D.E."/>
            <person name="Grahame D.A."/>
            <person name="Guss A.M."/>
            <person name="Hedderich R."/>
            <person name="Ingram-Smith C."/>
            <person name="Kuettner H.C."/>
            <person name="Krzycki J.A."/>
            <person name="Leigh J.A."/>
            <person name="Li W."/>
            <person name="Liu J."/>
            <person name="Mukhopadhyay B."/>
            <person name="Reeve J.N."/>
            <person name="Smith K."/>
            <person name="Springer T.A."/>
            <person name="Umayam L.A."/>
            <person name="White O."/>
            <person name="White R.H."/>
            <person name="de Macario E.C."/>
            <person name="Ferry J.G."/>
            <person name="Jarrell K.F."/>
            <person name="Jing H."/>
            <person name="Macario A.J.L."/>
            <person name="Paulsen I.T."/>
            <person name="Pritchett M."/>
            <person name="Sowers K.R."/>
            <person name="Swanson R.V."/>
            <person name="Zinder S.H."/>
            <person name="Lander E."/>
            <person name="Metcalf W.W."/>
            <person name="Birren B."/>
        </authorList>
    </citation>
    <scope>NUCLEOTIDE SEQUENCE [LARGE SCALE GENOMIC DNA]</scope>
    <source>
        <strain>ATCC 35395 / DSM 2834 / JCM 12185 / C2A</strain>
    </source>
</reference>
<feature type="chain" id="PRO_0000137607" description="GTP-dependent dephospho-CoA kinase">
    <location>
        <begin position="1"/>
        <end position="195"/>
    </location>
</feature>
<feature type="binding site" evidence="1">
    <location>
        <position position="49"/>
    </location>
    <ligand>
        <name>GTP</name>
        <dbReference type="ChEBI" id="CHEBI:37565"/>
    </ligand>
</feature>
<feature type="binding site" evidence="1">
    <location>
        <position position="50"/>
    </location>
    <ligand>
        <name>GTP</name>
        <dbReference type="ChEBI" id="CHEBI:37565"/>
    </ligand>
</feature>
<feature type="binding site" evidence="1">
    <location>
        <position position="68"/>
    </location>
    <ligand>
        <name>GTP</name>
        <dbReference type="ChEBI" id="CHEBI:37565"/>
    </ligand>
</feature>
<feature type="binding site" evidence="1">
    <location>
        <position position="127"/>
    </location>
    <ligand>
        <name>GTP</name>
        <dbReference type="ChEBI" id="CHEBI:37565"/>
    </ligand>
</feature>
<feature type="binding site" evidence="1">
    <location>
        <position position="150"/>
    </location>
    <ligand>
        <name>GTP</name>
        <dbReference type="ChEBI" id="CHEBI:37565"/>
    </ligand>
</feature>
<name>DPCKG_METAC</name>
<proteinExistence type="inferred from homology"/>
<keyword id="KW-0173">Coenzyme A biosynthesis</keyword>
<keyword id="KW-0342">GTP-binding</keyword>
<keyword id="KW-0418">Kinase</keyword>
<keyword id="KW-0547">Nucleotide-binding</keyword>
<keyword id="KW-1185">Reference proteome</keyword>
<keyword id="KW-0808">Transferase</keyword>
<protein>
    <recommendedName>
        <fullName evidence="1">GTP-dependent dephospho-CoA kinase</fullName>
        <ecNumber evidence="1">2.7.1.237</ecNumber>
    </recommendedName>
    <alternativeName>
        <fullName evidence="1">Dephospho-coenzyme A kinase</fullName>
        <shortName evidence="1">DPCK</shortName>
    </alternativeName>
</protein>
<gene>
    <name type="ordered locus">MA_3694</name>
</gene>
<evidence type="ECO:0000255" key="1">
    <source>
        <dbReference type="HAMAP-Rule" id="MF_00590"/>
    </source>
</evidence>
<dbReference type="EC" id="2.7.1.237" evidence="1"/>
<dbReference type="EMBL" id="AE010299">
    <property type="protein sequence ID" value="AAM07049.1"/>
    <property type="molecule type" value="Genomic_DNA"/>
</dbReference>
<dbReference type="RefSeq" id="WP_011023601.1">
    <property type="nucleotide sequence ID" value="NC_003552.1"/>
</dbReference>
<dbReference type="SMR" id="Q8TJT3"/>
<dbReference type="FunCoup" id="Q8TJT3">
    <property type="interactions" value="4"/>
</dbReference>
<dbReference type="STRING" id="188937.MA_3694"/>
<dbReference type="EnsemblBacteria" id="AAM07049">
    <property type="protein sequence ID" value="AAM07049"/>
    <property type="gene ID" value="MA_3694"/>
</dbReference>
<dbReference type="GeneID" id="1475587"/>
<dbReference type="KEGG" id="mac:MA_3694"/>
<dbReference type="HOGENOM" id="CLU_120795_1_0_2"/>
<dbReference type="InParanoid" id="Q8TJT3"/>
<dbReference type="OrthoDB" id="15447at2157"/>
<dbReference type="PhylomeDB" id="Q8TJT3"/>
<dbReference type="UniPathway" id="UPA00241"/>
<dbReference type="Proteomes" id="UP000002487">
    <property type="component" value="Chromosome"/>
</dbReference>
<dbReference type="GO" id="GO:0005525">
    <property type="term" value="F:GTP binding"/>
    <property type="evidence" value="ECO:0007669"/>
    <property type="project" value="UniProtKB-UniRule"/>
</dbReference>
<dbReference type="GO" id="GO:0016301">
    <property type="term" value="F:kinase activity"/>
    <property type="evidence" value="ECO:0007669"/>
    <property type="project" value="UniProtKB-UniRule"/>
</dbReference>
<dbReference type="GO" id="GO:0015937">
    <property type="term" value="P:coenzyme A biosynthetic process"/>
    <property type="evidence" value="ECO:0007669"/>
    <property type="project" value="UniProtKB-UniRule"/>
</dbReference>
<dbReference type="HAMAP" id="MF_00590">
    <property type="entry name" value="Dephospho_CoA_kinase_GTP_dep"/>
    <property type="match status" value="1"/>
</dbReference>
<dbReference type="InterPro" id="IPR007164">
    <property type="entry name" value="GTP-dep_dephospho-CoA_kin"/>
</dbReference>
<dbReference type="PANTHER" id="PTHR40732:SF1">
    <property type="entry name" value="GTP-DEPENDENT DEPHOSPHO-COA KINASE"/>
    <property type="match status" value="1"/>
</dbReference>
<dbReference type="PANTHER" id="PTHR40732">
    <property type="entry name" value="UPF0218 PROTEIN TK1697"/>
    <property type="match status" value="1"/>
</dbReference>
<dbReference type="Pfam" id="PF04019">
    <property type="entry name" value="DUF359"/>
    <property type="match status" value="1"/>
</dbReference>
<dbReference type="PIRSF" id="PIRSF006533">
    <property type="entry name" value="UCP006533"/>
    <property type="match status" value="1"/>
</dbReference>